<sequence length="271" mass="28659">MKLAERTAADLRFARAGAHTVLTRRRHRWPFVIGRVFADPQDPGLGTLTLQNAAGTVIPGDVIRQRIEVVDGGRAAVNGQGATLISGVPGGDASAEETELYVDAHSWLRFDPAPRILTAHARHRQRTEVCVAHRGCAVVVDAVVLHPDLDAATFGSIESTVTVRSPGGALLAMDAQVLDAPPVTGRFTAFGTVYFVGAGFTGGHHEGPTDPPGVYTAVTELPNGAGCAVRIAAADGGTLRTYLRLLSAETAFQRASTRTFTDGMPFRRSQV</sequence>
<accession>A0QRF3</accession>
<accession>I7G4S5</accession>
<reference key="1">
    <citation type="submission" date="2006-10" db="EMBL/GenBank/DDBJ databases">
        <authorList>
            <person name="Fleischmann R.D."/>
            <person name="Dodson R.J."/>
            <person name="Haft D.H."/>
            <person name="Merkel J.S."/>
            <person name="Nelson W.C."/>
            <person name="Fraser C.M."/>
        </authorList>
    </citation>
    <scope>NUCLEOTIDE SEQUENCE [LARGE SCALE GENOMIC DNA]</scope>
    <source>
        <strain>ATCC 700084 / mc(2)155</strain>
    </source>
</reference>
<reference key="2">
    <citation type="journal article" date="2007" name="Genome Biol.">
        <title>Interrupted coding sequences in Mycobacterium smegmatis: authentic mutations or sequencing errors?</title>
        <authorList>
            <person name="Deshayes C."/>
            <person name="Perrodou E."/>
            <person name="Gallien S."/>
            <person name="Euphrasie D."/>
            <person name="Schaeffer C."/>
            <person name="Van-Dorsselaer A."/>
            <person name="Poch O."/>
            <person name="Lecompte O."/>
            <person name="Reyrat J.-M."/>
        </authorList>
    </citation>
    <scope>NUCLEOTIDE SEQUENCE [LARGE SCALE GENOMIC DNA]</scope>
    <source>
        <strain>ATCC 700084 / mc(2)155</strain>
    </source>
</reference>
<reference key="3">
    <citation type="journal article" date="2009" name="Genome Res.">
        <title>Ortho-proteogenomics: multiple proteomes investigation through orthology and a new MS-based protocol.</title>
        <authorList>
            <person name="Gallien S."/>
            <person name="Perrodou E."/>
            <person name="Carapito C."/>
            <person name="Deshayes C."/>
            <person name="Reyrat J.-M."/>
            <person name="Van Dorsselaer A."/>
            <person name="Poch O."/>
            <person name="Schaeffer C."/>
            <person name="Lecompte O."/>
        </authorList>
    </citation>
    <scope>NUCLEOTIDE SEQUENCE [LARGE SCALE GENOMIC DNA]</scope>
    <source>
        <strain>ATCC 700084 / mc(2)155</strain>
    </source>
</reference>
<comment type="function">
    <text evidence="1">Required for maturation of urease via the functional incorporation of the urease nickel metallocenter.</text>
</comment>
<comment type="subunit">
    <text evidence="1">UreD, UreF and UreG form a complex that acts as a GTP-hydrolysis-dependent molecular chaperone, activating the urease apoprotein by helping to assemble the nickel containing metallocenter of UreC. The UreE protein probably delivers the nickel.</text>
</comment>
<comment type="subcellular location">
    <subcellularLocation>
        <location evidence="1">Cytoplasm</location>
    </subcellularLocation>
</comment>
<comment type="similarity">
    <text evidence="1">Belongs to the UreD family.</text>
</comment>
<proteinExistence type="inferred from homology"/>
<evidence type="ECO:0000255" key="1">
    <source>
        <dbReference type="HAMAP-Rule" id="MF_01384"/>
    </source>
</evidence>
<dbReference type="EMBL" id="CP000480">
    <property type="protein sequence ID" value="ABK73647.1"/>
    <property type="molecule type" value="Genomic_DNA"/>
</dbReference>
<dbReference type="EMBL" id="CP001663">
    <property type="protein sequence ID" value="AFP37544.1"/>
    <property type="molecule type" value="Genomic_DNA"/>
</dbReference>
<dbReference type="RefSeq" id="WP_011727405.1">
    <property type="nucleotide sequence ID" value="NZ_SIJM01000011.1"/>
</dbReference>
<dbReference type="RefSeq" id="YP_885491.1">
    <property type="nucleotide sequence ID" value="NC_008596.1"/>
</dbReference>
<dbReference type="SMR" id="A0QRF3"/>
<dbReference type="STRING" id="246196.MSMEG_1096"/>
<dbReference type="PaxDb" id="246196-MSMEI_1064"/>
<dbReference type="KEGG" id="msb:LJ00_05450"/>
<dbReference type="KEGG" id="msg:MSMEI_1064"/>
<dbReference type="KEGG" id="msm:MSMEG_1096"/>
<dbReference type="PATRIC" id="fig|246196.19.peg.1084"/>
<dbReference type="eggNOG" id="COG0829">
    <property type="taxonomic scope" value="Bacteria"/>
</dbReference>
<dbReference type="OrthoDB" id="4625223at2"/>
<dbReference type="Proteomes" id="UP000000757">
    <property type="component" value="Chromosome"/>
</dbReference>
<dbReference type="Proteomes" id="UP000006158">
    <property type="component" value="Chromosome"/>
</dbReference>
<dbReference type="GO" id="GO:0005737">
    <property type="term" value="C:cytoplasm"/>
    <property type="evidence" value="ECO:0007669"/>
    <property type="project" value="UniProtKB-SubCell"/>
</dbReference>
<dbReference type="GO" id="GO:0016151">
    <property type="term" value="F:nickel cation binding"/>
    <property type="evidence" value="ECO:0007669"/>
    <property type="project" value="UniProtKB-UniRule"/>
</dbReference>
<dbReference type="HAMAP" id="MF_01384">
    <property type="entry name" value="UreD"/>
    <property type="match status" value="1"/>
</dbReference>
<dbReference type="InterPro" id="IPR002669">
    <property type="entry name" value="UreD"/>
</dbReference>
<dbReference type="Pfam" id="PF01774">
    <property type="entry name" value="UreD"/>
    <property type="match status" value="1"/>
</dbReference>
<name>URED_MYCS2</name>
<feature type="chain" id="PRO_0000346582" description="Urease accessory protein UreD">
    <location>
        <begin position="1"/>
        <end position="271"/>
    </location>
</feature>
<gene>
    <name evidence="1" type="primary">ureD</name>
    <name type="ordered locus">MSMEG_1096</name>
    <name type="ordered locus">MSMEI_1064</name>
</gene>
<keyword id="KW-0143">Chaperone</keyword>
<keyword id="KW-0963">Cytoplasm</keyword>
<keyword id="KW-0996">Nickel insertion</keyword>
<keyword id="KW-1185">Reference proteome</keyword>
<protein>
    <recommendedName>
        <fullName evidence="1">Urease accessory protein UreD</fullName>
    </recommendedName>
</protein>
<organism>
    <name type="scientific">Mycolicibacterium smegmatis (strain ATCC 700084 / mc(2)155)</name>
    <name type="common">Mycobacterium smegmatis</name>
    <dbReference type="NCBI Taxonomy" id="246196"/>
    <lineage>
        <taxon>Bacteria</taxon>
        <taxon>Bacillati</taxon>
        <taxon>Actinomycetota</taxon>
        <taxon>Actinomycetes</taxon>
        <taxon>Mycobacteriales</taxon>
        <taxon>Mycobacteriaceae</taxon>
        <taxon>Mycolicibacterium</taxon>
    </lineage>
</organism>